<organism>
    <name type="scientific">Aspergillus fumigatus (strain CBS 144.89 / FGSC A1163 / CEA10)</name>
    <name type="common">Neosartorya fumigata</name>
    <dbReference type="NCBI Taxonomy" id="451804"/>
    <lineage>
        <taxon>Eukaryota</taxon>
        <taxon>Fungi</taxon>
        <taxon>Dikarya</taxon>
        <taxon>Ascomycota</taxon>
        <taxon>Pezizomycotina</taxon>
        <taxon>Eurotiomycetes</taxon>
        <taxon>Eurotiomycetidae</taxon>
        <taxon>Eurotiales</taxon>
        <taxon>Aspergillaceae</taxon>
        <taxon>Aspergillus</taxon>
        <taxon>Aspergillus subgen. Fumigati</taxon>
    </lineage>
</organism>
<comment type="function">
    <text evidence="1">Functions as a sorting receptor in the Golgi compartment required for the intracellular sorting and delivery of soluble vacuolar proteins, like carboxypeptidase Y (CPY) and proteinase A. Executes multiple rounds of sorting by cycling between the late Golgi and a prevacuolar endosome-like compartment (By similarity).</text>
</comment>
<comment type="subcellular location">
    <subcellularLocation>
        <location evidence="1">Golgi apparatus</location>
        <location evidence="1">trans-Golgi network membrane</location>
        <topology evidence="1">Multi-pass membrane protein</topology>
    </subcellularLocation>
    <subcellularLocation>
        <location evidence="1">Prevacuolar compartment membrane</location>
        <topology evidence="1">Multi-pass membrane protein</topology>
    </subcellularLocation>
    <text evidence="1">Cycles between the Golgi apparatus and the prevacuolar compartment.</text>
</comment>
<comment type="similarity">
    <text evidence="3">Belongs to the VPS10-related sortilin family.</text>
</comment>
<sequence length="1487" mass="166459">MITRWLLITSFLALAILSLSSAAKKSEPEITSSSFDNEPFSLSYFEDTETILMNTRDGNLFRSFDGGKAWEQVDGPDGKMKKAVRSIWQHPFDKNKAYALGANRRHWVTKDQAKTWESFEVDGYAAAQHEPLIFHGWDSAKVIFQSDECMGRLCIVKSYYTTDDFKTVSPLRVSAGGCLWAVGHPQFADGLNLEDELRDRVLCIVPGLKVPSAHANRLVYSDDFFRSDAEGTELNIQHGRPVSGILSAAAVKKFFVTAAKSQGTNELALYVTLDTKAWHRADFGGHRVEQDGYTLLESTNYSMQVDVLTSPSSNTGVLFTSNSNGTYFTRNVEHTNRDRFGHVDFEKIADIQGIVLVNTVKNWDKVESENEKKVVSSISFDDGRTFQSLKVGDKQLHLHSVTTFANTGRVFSSPAPGLVMGVGNTGDHLKKYSEGSLYVSDDAGVTWRHALDGPFKYEFGDQGSVIMAVSDKGTTDEIQFSIDHGKEWHSTKLQHKINPKLLTTTPDSTSLTFLLVGSEESSGTKHVVYSIDFHGLHERKCEKDDFEKWAARLNENGEPDCLMGHQQFFNRRKANADCFVDEEFKDPQPIFEPCKCSFEDFECDFNFVRSEDGKSCVPTAPLVPPVGRCQKQTDTFMGPSGWRLIPGNTCTREGGENLDKVVERPCKDVVSAPSHDKPMAQKQVFNDARQFSEQYYYLERQASSSGDDETVIMLTSEGEFWVSHDHGKNWEQPLKGVKIAAIVPHPYYSDGAFLLTRDKQAFWTVDRAYTFKSFEAPIPPNQEGLPVLSFHPHYKDWLIWTGAVDCSHGDCHSDAYFSKNRGENWDLLLRYVGKCEFESRENRPGSEKLIFCQQYENENKKNHLQLLSSENLFSDSHVHFNDAIRYATMSEYIIVASRDPDNPDSLIASVSVDGKTFARAEFPSNVDVPVKTAFTVLDSSTHAVFLHVTVSDVKGAEYGSIIKSNSNGTSYVLSLNAASRNEWGYVDFEKMQGLEGVAVVNIISNVDAVQKKGPAAKKLKTMITHNDGGQWMLLPPPAKDADGKNFGCSVKDGKGSDQCSLHLHGYTERRDPRDTFSSGSAIGLMMGIGNVGAYLSGKDEADTFMTRDGGITWKSVKKGRYMWEYGDAGSVIVIVPELRPTKVLYYSLDEGDNWEPYEFSEVEMHIYRLSTVPSDTSKNFLLWGKEMESNRLATINVDFSGLRKKSCILVEDGQESDDYYLWEPKHPFQEDNCLFGHVEQYHRKKPSSQCWNNWREPHVHSIGRNCTCTRADYECNYNYEPQNDGSCALVPGLPKPDALAVCREDPDRVEYWEPTAYRRIPQTTCSGGLILDHVVSKPCPSKEKEYEKKHGISGTGLFFAIMIPLVAAAGVGYYVYARWDGKFGQIRLGENAGTYEGLLSRESPIVTAPIAIIAGIVAVIRALPLLAMSLWRSASGYVRLGRNRAYSRPYASRGSFAARRGDYTSVVDDEDELLGVDDAEIDDDDEL</sequence>
<accession>B0YA89</accession>
<protein>
    <recommendedName>
        <fullName>Vacuolar protein sorting/targeting protein 10</fullName>
    </recommendedName>
    <alternativeName>
        <fullName>Carboxypeptidase Y receptor</fullName>
        <shortName>CPY receptor</shortName>
    </alternativeName>
    <alternativeName>
        <fullName>Sortilin vps10</fullName>
    </alternativeName>
    <alternativeName>
        <fullName>Vacuolar carboxypeptidase sorting receptor vps10</fullName>
    </alternativeName>
</protein>
<feature type="signal peptide" evidence="2">
    <location>
        <begin position="1"/>
        <end position="22"/>
    </location>
</feature>
<feature type="chain" id="PRO_0000407504" description="Vacuolar protein sorting/targeting protein 10">
    <location>
        <begin position="23"/>
        <end position="1487"/>
    </location>
</feature>
<feature type="topological domain" description="Lumenal" evidence="2">
    <location>
        <begin position="23"/>
        <end position="1356"/>
    </location>
</feature>
<feature type="transmembrane region" description="Helical" evidence="2">
    <location>
        <begin position="1357"/>
        <end position="1377"/>
    </location>
</feature>
<feature type="topological domain" description="Cytoplasmic" evidence="2">
    <location>
        <begin position="1378"/>
        <end position="1409"/>
    </location>
</feature>
<feature type="transmembrane region" description="Helical" evidence="2">
    <location>
        <begin position="1410"/>
        <end position="1430"/>
    </location>
</feature>
<feature type="topological domain" description="Lumenal" evidence="2">
    <location>
        <begin position="1431"/>
        <end position="1487"/>
    </location>
</feature>
<feature type="repeat" description="BNR 1">
    <location>
        <begin position="61"/>
        <end position="71"/>
    </location>
</feature>
<feature type="repeat" description="BNR 2">
    <location>
        <begin position="378"/>
        <end position="387"/>
    </location>
</feature>
<feature type="repeat" description="BNR 3">
    <location>
        <begin position="438"/>
        <end position="448"/>
    </location>
</feature>
<feature type="repeat" description="BNR 4">
    <location>
        <begin position="479"/>
        <end position="489"/>
    </location>
</feature>
<feature type="repeat" description="BNR 5">
    <location>
        <begin position="721"/>
        <end position="731"/>
    </location>
</feature>
<feature type="repeat" description="BNR 6">
    <location>
        <begin position="816"/>
        <end position="826"/>
    </location>
</feature>
<feature type="repeat" description="BNR 7">
    <location>
        <begin position="1104"/>
        <end position="1114"/>
    </location>
</feature>
<feature type="repeat" description="BNR 8">
    <location>
        <begin position="1145"/>
        <end position="1155"/>
    </location>
</feature>
<feature type="glycosylation site" description="N-linked (GlcNAc...) asparagine" evidence="2">
    <location>
        <position position="300"/>
    </location>
</feature>
<feature type="glycosylation site" description="N-linked (GlcNAc...) asparagine" evidence="2">
    <location>
        <position position="324"/>
    </location>
</feature>
<feature type="glycosylation site" description="N-linked (GlcNAc...) asparagine" evidence="2">
    <location>
        <position position="967"/>
    </location>
</feature>
<feature type="glycosylation site" description="N-linked (GlcNAc...) asparagine" evidence="2">
    <location>
        <position position="1265"/>
    </location>
</feature>
<reference key="1">
    <citation type="journal article" date="2008" name="PLoS Genet.">
        <title>Genomic islands in the pathogenic filamentous fungus Aspergillus fumigatus.</title>
        <authorList>
            <person name="Fedorova N.D."/>
            <person name="Khaldi N."/>
            <person name="Joardar V.S."/>
            <person name="Maiti R."/>
            <person name="Amedeo P."/>
            <person name="Anderson M.J."/>
            <person name="Crabtree J."/>
            <person name="Silva J.C."/>
            <person name="Badger J.H."/>
            <person name="Albarraq A."/>
            <person name="Angiuoli S."/>
            <person name="Bussey H."/>
            <person name="Bowyer P."/>
            <person name="Cotty P.J."/>
            <person name="Dyer P.S."/>
            <person name="Egan A."/>
            <person name="Galens K."/>
            <person name="Fraser-Liggett C.M."/>
            <person name="Haas B.J."/>
            <person name="Inman J.M."/>
            <person name="Kent R."/>
            <person name="Lemieux S."/>
            <person name="Malavazi I."/>
            <person name="Orvis J."/>
            <person name="Roemer T."/>
            <person name="Ronning C.M."/>
            <person name="Sundaram J.P."/>
            <person name="Sutton G."/>
            <person name="Turner G."/>
            <person name="Venter J.C."/>
            <person name="White O.R."/>
            <person name="Whitty B.R."/>
            <person name="Youngman P."/>
            <person name="Wolfe K.H."/>
            <person name="Goldman G.H."/>
            <person name="Wortman J.R."/>
            <person name="Jiang B."/>
            <person name="Denning D.W."/>
            <person name="Nierman W.C."/>
        </authorList>
    </citation>
    <scope>NUCLEOTIDE SEQUENCE [LARGE SCALE GENOMIC DNA]</scope>
    <source>
        <strain>CBS 144.89 / FGSC A1163 / CEA10</strain>
    </source>
</reference>
<keyword id="KW-0325">Glycoprotein</keyword>
<keyword id="KW-0333">Golgi apparatus</keyword>
<keyword id="KW-0472">Membrane</keyword>
<keyword id="KW-0653">Protein transport</keyword>
<keyword id="KW-0675">Receptor</keyword>
<keyword id="KW-0677">Repeat</keyword>
<keyword id="KW-0732">Signal</keyword>
<keyword id="KW-0812">Transmembrane</keyword>
<keyword id="KW-1133">Transmembrane helix</keyword>
<keyword id="KW-0813">Transport</keyword>
<proteinExistence type="inferred from homology"/>
<name>VPS10_ASPFC</name>
<dbReference type="EMBL" id="DS499600">
    <property type="protein sequence ID" value="EDP48932.1"/>
    <property type="molecule type" value="Genomic_DNA"/>
</dbReference>
<dbReference type="SMR" id="B0YA89"/>
<dbReference type="GlyCosmos" id="B0YA89">
    <property type="glycosylation" value="4 sites, No reported glycans"/>
</dbReference>
<dbReference type="EnsemblFungi" id="EDP48932">
    <property type="protein sequence ID" value="EDP48932"/>
    <property type="gene ID" value="AFUB_083810"/>
</dbReference>
<dbReference type="VEuPathDB" id="FungiDB:AFUB_083810"/>
<dbReference type="HOGENOM" id="CLU_000700_0_0_1"/>
<dbReference type="OrthoDB" id="67529at5052"/>
<dbReference type="PhylomeDB" id="B0YA89"/>
<dbReference type="Proteomes" id="UP000001699">
    <property type="component" value="Unassembled WGS sequence"/>
</dbReference>
<dbReference type="GO" id="GO:0005829">
    <property type="term" value="C:cytosol"/>
    <property type="evidence" value="ECO:0007669"/>
    <property type="project" value="GOC"/>
</dbReference>
<dbReference type="GO" id="GO:0005794">
    <property type="term" value="C:Golgi apparatus"/>
    <property type="evidence" value="ECO:0007669"/>
    <property type="project" value="UniProtKB-SubCell"/>
</dbReference>
<dbReference type="GO" id="GO:0016020">
    <property type="term" value="C:membrane"/>
    <property type="evidence" value="ECO:0007669"/>
    <property type="project" value="UniProtKB-KW"/>
</dbReference>
<dbReference type="GO" id="GO:0006895">
    <property type="term" value="P:Golgi to endosome transport"/>
    <property type="evidence" value="ECO:0007669"/>
    <property type="project" value="TreeGrafter"/>
</dbReference>
<dbReference type="GO" id="GO:0006896">
    <property type="term" value="P:Golgi to vacuole transport"/>
    <property type="evidence" value="ECO:0007669"/>
    <property type="project" value="TreeGrafter"/>
</dbReference>
<dbReference type="GO" id="GO:0006623">
    <property type="term" value="P:protein targeting to vacuole"/>
    <property type="evidence" value="ECO:0007669"/>
    <property type="project" value="TreeGrafter"/>
</dbReference>
<dbReference type="CDD" id="cd15482">
    <property type="entry name" value="Sialidase_non-viral"/>
    <property type="match status" value="1"/>
</dbReference>
<dbReference type="FunFam" id="2.10.70.80:FF:000006">
    <property type="entry name" value="Sortilin"/>
    <property type="match status" value="1"/>
</dbReference>
<dbReference type="FunFam" id="2.130.10.10:FF:000676">
    <property type="entry name" value="Sortilin"/>
    <property type="match status" value="1"/>
</dbReference>
<dbReference type="FunFam" id="3.30.60.270:FF:000005">
    <property type="entry name" value="Sortilin"/>
    <property type="match status" value="2"/>
</dbReference>
<dbReference type="FunFam" id="2.10.70.80:FF:000001">
    <property type="entry name" value="Sortilin-related VPS10 domain-containing receptor 1"/>
    <property type="match status" value="1"/>
</dbReference>
<dbReference type="Gene3D" id="2.10.70.80">
    <property type="match status" value="2"/>
</dbReference>
<dbReference type="Gene3D" id="3.30.60.270">
    <property type="match status" value="2"/>
</dbReference>
<dbReference type="Gene3D" id="2.130.10.10">
    <property type="entry name" value="YVTN repeat-like/Quinoprotein amine dehydrogenase"/>
    <property type="match status" value="1"/>
</dbReference>
<dbReference type="InterPro" id="IPR036278">
    <property type="entry name" value="Sialidase_sf"/>
</dbReference>
<dbReference type="InterPro" id="IPR031777">
    <property type="entry name" value="Sortilin_C"/>
</dbReference>
<dbReference type="InterPro" id="IPR031778">
    <property type="entry name" value="Sortilin_N"/>
</dbReference>
<dbReference type="InterPro" id="IPR006581">
    <property type="entry name" value="VPS10"/>
</dbReference>
<dbReference type="InterPro" id="IPR050310">
    <property type="entry name" value="VPS10-sortilin"/>
</dbReference>
<dbReference type="InterPro" id="IPR015943">
    <property type="entry name" value="WD40/YVTN_repeat-like_dom_sf"/>
</dbReference>
<dbReference type="PANTHER" id="PTHR12106">
    <property type="entry name" value="SORTILIN RELATED"/>
    <property type="match status" value="1"/>
</dbReference>
<dbReference type="PANTHER" id="PTHR12106:SF27">
    <property type="entry name" value="SORTILIN-RELATED RECEPTOR"/>
    <property type="match status" value="1"/>
</dbReference>
<dbReference type="Pfam" id="PF15902">
    <property type="entry name" value="Sortilin-Vps10"/>
    <property type="match status" value="2"/>
</dbReference>
<dbReference type="Pfam" id="PF15901">
    <property type="entry name" value="Sortilin_C"/>
    <property type="match status" value="2"/>
</dbReference>
<dbReference type="SMART" id="SM00602">
    <property type="entry name" value="VPS10"/>
    <property type="match status" value="2"/>
</dbReference>
<dbReference type="SUPFAM" id="SSF110296">
    <property type="entry name" value="Oligoxyloglucan reducing end-specific cellobiohydrolase"/>
    <property type="match status" value="2"/>
</dbReference>
<dbReference type="SUPFAM" id="SSF50939">
    <property type="entry name" value="Sialidases"/>
    <property type="match status" value="1"/>
</dbReference>
<evidence type="ECO:0000250" key="1"/>
<evidence type="ECO:0000255" key="2"/>
<evidence type="ECO:0000305" key="3"/>
<gene>
    <name type="primary">vps10</name>
    <name type="ORF">AFUB_083810</name>
</gene>